<keyword id="KW-0460">Magnesium</keyword>
<keyword id="KW-0479">Metal-binding</keyword>
<keyword id="KW-1185">Reference proteome</keyword>
<keyword id="KW-0784">Thiamine biosynthesis</keyword>
<keyword id="KW-0808">Transferase</keyword>
<sequence>MYQPDFPPVPFRSGLYPVVDSVQWIERLLDAGVRTLQLRIKDRRDEEVEADVVAAIALGRRYNARLFINDYWRLAIKHQAYGVHLGQEDLQATDLNAIRAAGLRLGVSTHDDMEIDVALAARPSYIALGHVFPTQTKQMPSAPQGLEQLARHVERLADYPTVAIGGISLARAPAVIATGVGSIAVVSAITQAADWRLATAQLLEIAGVGDE</sequence>
<comment type="function">
    <text evidence="1">Condenses 4-methyl-5-(beta-hydroxyethyl)thiazole monophosphate (THZ-P) and 2-methyl-4-amino-5-hydroxymethyl pyrimidine pyrophosphate (HMP-PP) to form thiamine monophosphate (TMP).</text>
</comment>
<comment type="catalytic activity">
    <reaction evidence="1">
        <text>2-[(2R,5Z)-2-carboxy-4-methylthiazol-5(2H)-ylidene]ethyl phosphate + 4-amino-2-methyl-5-(diphosphooxymethyl)pyrimidine + 2 H(+) = thiamine phosphate + CO2 + diphosphate</text>
        <dbReference type="Rhea" id="RHEA:47844"/>
        <dbReference type="ChEBI" id="CHEBI:15378"/>
        <dbReference type="ChEBI" id="CHEBI:16526"/>
        <dbReference type="ChEBI" id="CHEBI:33019"/>
        <dbReference type="ChEBI" id="CHEBI:37575"/>
        <dbReference type="ChEBI" id="CHEBI:57841"/>
        <dbReference type="ChEBI" id="CHEBI:62899"/>
        <dbReference type="EC" id="2.5.1.3"/>
    </reaction>
</comment>
<comment type="catalytic activity">
    <reaction evidence="1">
        <text>2-(2-carboxy-4-methylthiazol-5-yl)ethyl phosphate + 4-amino-2-methyl-5-(diphosphooxymethyl)pyrimidine + 2 H(+) = thiamine phosphate + CO2 + diphosphate</text>
        <dbReference type="Rhea" id="RHEA:47848"/>
        <dbReference type="ChEBI" id="CHEBI:15378"/>
        <dbReference type="ChEBI" id="CHEBI:16526"/>
        <dbReference type="ChEBI" id="CHEBI:33019"/>
        <dbReference type="ChEBI" id="CHEBI:37575"/>
        <dbReference type="ChEBI" id="CHEBI:57841"/>
        <dbReference type="ChEBI" id="CHEBI:62890"/>
        <dbReference type="EC" id="2.5.1.3"/>
    </reaction>
</comment>
<comment type="catalytic activity">
    <reaction evidence="1">
        <text>4-methyl-5-(2-phosphooxyethyl)-thiazole + 4-amino-2-methyl-5-(diphosphooxymethyl)pyrimidine + H(+) = thiamine phosphate + diphosphate</text>
        <dbReference type="Rhea" id="RHEA:22328"/>
        <dbReference type="ChEBI" id="CHEBI:15378"/>
        <dbReference type="ChEBI" id="CHEBI:33019"/>
        <dbReference type="ChEBI" id="CHEBI:37575"/>
        <dbReference type="ChEBI" id="CHEBI:57841"/>
        <dbReference type="ChEBI" id="CHEBI:58296"/>
        <dbReference type="EC" id="2.5.1.3"/>
    </reaction>
</comment>
<comment type="cofactor">
    <cofactor evidence="1">
        <name>Mg(2+)</name>
        <dbReference type="ChEBI" id="CHEBI:18420"/>
    </cofactor>
    <text evidence="1">Binds 1 Mg(2+) ion per subunit.</text>
</comment>
<comment type="pathway">
    <text evidence="1">Cofactor biosynthesis; thiamine diphosphate biosynthesis; thiamine phosphate from 4-amino-2-methyl-5-diphosphomethylpyrimidine and 4-methyl-5-(2-phosphoethyl)-thiazole: step 1/1.</text>
</comment>
<comment type="similarity">
    <text evidence="1">Belongs to the thiamine-phosphate synthase family.</text>
</comment>
<name>THIE_ECO24</name>
<reference key="1">
    <citation type="journal article" date="2008" name="J. Bacteriol.">
        <title>The pangenome structure of Escherichia coli: comparative genomic analysis of E. coli commensal and pathogenic isolates.</title>
        <authorList>
            <person name="Rasko D.A."/>
            <person name="Rosovitz M.J."/>
            <person name="Myers G.S.A."/>
            <person name="Mongodin E.F."/>
            <person name="Fricke W.F."/>
            <person name="Gajer P."/>
            <person name="Crabtree J."/>
            <person name="Sebaihia M."/>
            <person name="Thomson N.R."/>
            <person name="Chaudhuri R."/>
            <person name="Henderson I.R."/>
            <person name="Sperandio V."/>
            <person name="Ravel J."/>
        </authorList>
    </citation>
    <scope>NUCLEOTIDE SEQUENCE [LARGE SCALE GENOMIC DNA]</scope>
    <source>
        <strain>E24377A / ETEC</strain>
    </source>
</reference>
<organism>
    <name type="scientific">Escherichia coli O139:H28 (strain E24377A / ETEC)</name>
    <dbReference type="NCBI Taxonomy" id="331111"/>
    <lineage>
        <taxon>Bacteria</taxon>
        <taxon>Pseudomonadati</taxon>
        <taxon>Pseudomonadota</taxon>
        <taxon>Gammaproteobacteria</taxon>
        <taxon>Enterobacterales</taxon>
        <taxon>Enterobacteriaceae</taxon>
        <taxon>Escherichia</taxon>
    </lineage>
</organism>
<evidence type="ECO:0000255" key="1">
    <source>
        <dbReference type="HAMAP-Rule" id="MF_00097"/>
    </source>
</evidence>
<proteinExistence type="inferred from homology"/>
<protein>
    <recommendedName>
        <fullName evidence="1">Thiamine-phosphate synthase</fullName>
        <shortName evidence="1">TP synthase</shortName>
        <shortName evidence="1">TPS</shortName>
        <ecNumber evidence="1">2.5.1.3</ecNumber>
    </recommendedName>
    <alternativeName>
        <fullName evidence="1">Thiamine-phosphate pyrophosphorylase</fullName>
        <shortName evidence="1">TMP pyrophosphorylase</shortName>
        <shortName evidence="1">TMP-PPase</shortName>
    </alternativeName>
</protein>
<gene>
    <name evidence="1" type="primary">thiE</name>
    <name type="ordered locus">EcE24377A_4535</name>
</gene>
<accession>A7ZUK8</accession>
<feature type="chain" id="PRO_1000057641" description="Thiamine-phosphate synthase">
    <location>
        <begin position="1"/>
        <end position="211"/>
    </location>
</feature>
<feature type="binding site" evidence="1">
    <location>
        <begin position="37"/>
        <end position="41"/>
    </location>
    <ligand>
        <name>4-amino-2-methyl-5-(diphosphooxymethyl)pyrimidine</name>
        <dbReference type="ChEBI" id="CHEBI:57841"/>
    </ligand>
</feature>
<feature type="binding site" evidence="1">
    <location>
        <position position="69"/>
    </location>
    <ligand>
        <name>4-amino-2-methyl-5-(diphosphooxymethyl)pyrimidine</name>
        <dbReference type="ChEBI" id="CHEBI:57841"/>
    </ligand>
</feature>
<feature type="binding site" evidence="1">
    <location>
        <position position="70"/>
    </location>
    <ligand>
        <name>Mg(2+)</name>
        <dbReference type="ChEBI" id="CHEBI:18420"/>
    </ligand>
</feature>
<feature type="binding site" evidence="1">
    <location>
        <position position="89"/>
    </location>
    <ligand>
        <name>Mg(2+)</name>
        <dbReference type="ChEBI" id="CHEBI:18420"/>
    </ligand>
</feature>
<feature type="binding site" evidence="1">
    <location>
        <position position="108"/>
    </location>
    <ligand>
        <name>4-amino-2-methyl-5-(diphosphooxymethyl)pyrimidine</name>
        <dbReference type="ChEBI" id="CHEBI:57841"/>
    </ligand>
</feature>
<feature type="binding site" evidence="1">
    <location>
        <begin position="134"/>
        <end position="136"/>
    </location>
    <ligand>
        <name>2-[(2R,5Z)-2-carboxy-4-methylthiazol-5(2H)-ylidene]ethyl phosphate</name>
        <dbReference type="ChEBI" id="CHEBI:62899"/>
    </ligand>
</feature>
<feature type="binding site" evidence="1">
    <location>
        <position position="137"/>
    </location>
    <ligand>
        <name>4-amino-2-methyl-5-(diphosphooxymethyl)pyrimidine</name>
        <dbReference type="ChEBI" id="CHEBI:57841"/>
    </ligand>
</feature>
<feature type="binding site" evidence="1">
    <location>
        <position position="166"/>
    </location>
    <ligand>
        <name>2-[(2R,5Z)-2-carboxy-4-methylthiazol-5(2H)-ylidene]ethyl phosphate</name>
        <dbReference type="ChEBI" id="CHEBI:62899"/>
    </ligand>
</feature>
<feature type="binding site" evidence="1">
    <location>
        <begin position="186"/>
        <end position="187"/>
    </location>
    <ligand>
        <name>2-[(2R,5Z)-2-carboxy-4-methylthiazol-5(2H)-ylidene]ethyl phosphate</name>
        <dbReference type="ChEBI" id="CHEBI:62899"/>
    </ligand>
</feature>
<dbReference type="EC" id="2.5.1.3" evidence="1"/>
<dbReference type="EMBL" id="CP000800">
    <property type="protein sequence ID" value="ABV16469.1"/>
    <property type="molecule type" value="Genomic_DNA"/>
</dbReference>
<dbReference type="RefSeq" id="WP_000284615.1">
    <property type="nucleotide sequence ID" value="NC_009801.1"/>
</dbReference>
<dbReference type="SMR" id="A7ZUK8"/>
<dbReference type="GeneID" id="75205511"/>
<dbReference type="KEGG" id="ecw:EcE24377A_4535"/>
<dbReference type="HOGENOM" id="CLU_018272_3_3_6"/>
<dbReference type="UniPathway" id="UPA00060">
    <property type="reaction ID" value="UER00141"/>
</dbReference>
<dbReference type="Proteomes" id="UP000001122">
    <property type="component" value="Chromosome"/>
</dbReference>
<dbReference type="GO" id="GO:0005737">
    <property type="term" value="C:cytoplasm"/>
    <property type="evidence" value="ECO:0007669"/>
    <property type="project" value="TreeGrafter"/>
</dbReference>
<dbReference type="GO" id="GO:0000287">
    <property type="term" value="F:magnesium ion binding"/>
    <property type="evidence" value="ECO:0007669"/>
    <property type="project" value="UniProtKB-UniRule"/>
</dbReference>
<dbReference type="GO" id="GO:0004789">
    <property type="term" value="F:thiamine-phosphate diphosphorylase activity"/>
    <property type="evidence" value="ECO:0007669"/>
    <property type="project" value="UniProtKB-UniRule"/>
</dbReference>
<dbReference type="GO" id="GO:0009228">
    <property type="term" value="P:thiamine biosynthetic process"/>
    <property type="evidence" value="ECO:0007669"/>
    <property type="project" value="UniProtKB-KW"/>
</dbReference>
<dbReference type="GO" id="GO:0009229">
    <property type="term" value="P:thiamine diphosphate biosynthetic process"/>
    <property type="evidence" value="ECO:0007669"/>
    <property type="project" value="UniProtKB-UniRule"/>
</dbReference>
<dbReference type="CDD" id="cd00564">
    <property type="entry name" value="TMP_TenI"/>
    <property type="match status" value="1"/>
</dbReference>
<dbReference type="FunFam" id="3.20.20.70:FF:000064">
    <property type="entry name" value="Thiamine-phosphate synthase"/>
    <property type="match status" value="1"/>
</dbReference>
<dbReference type="Gene3D" id="3.20.20.70">
    <property type="entry name" value="Aldolase class I"/>
    <property type="match status" value="1"/>
</dbReference>
<dbReference type="HAMAP" id="MF_00097">
    <property type="entry name" value="TMP_synthase"/>
    <property type="match status" value="1"/>
</dbReference>
<dbReference type="InterPro" id="IPR013785">
    <property type="entry name" value="Aldolase_TIM"/>
</dbReference>
<dbReference type="InterPro" id="IPR036206">
    <property type="entry name" value="ThiamineP_synth_sf"/>
</dbReference>
<dbReference type="InterPro" id="IPR022998">
    <property type="entry name" value="ThiamineP_synth_TenI"/>
</dbReference>
<dbReference type="InterPro" id="IPR034291">
    <property type="entry name" value="TMP_synthase"/>
</dbReference>
<dbReference type="NCBIfam" id="NF002904">
    <property type="entry name" value="PRK03512.1"/>
    <property type="match status" value="1"/>
</dbReference>
<dbReference type="NCBIfam" id="TIGR00693">
    <property type="entry name" value="thiE"/>
    <property type="match status" value="1"/>
</dbReference>
<dbReference type="PANTHER" id="PTHR20857">
    <property type="entry name" value="THIAMINE-PHOSPHATE PYROPHOSPHORYLASE"/>
    <property type="match status" value="1"/>
</dbReference>
<dbReference type="PANTHER" id="PTHR20857:SF15">
    <property type="entry name" value="THIAMINE-PHOSPHATE SYNTHASE"/>
    <property type="match status" value="1"/>
</dbReference>
<dbReference type="Pfam" id="PF02581">
    <property type="entry name" value="TMP-TENI"/>
    <property type="match status" value="1"/>
</dbReference>
<dbReference type="SUPFAM" id="SSF51391">
    <property type="entry name" value="Thiamin phosphate synthase"/>
    <property type="match status" value="1"/>
</dbReference>